<dbReference type="EC" id="2.4.1.227" evidence="1"/>
<dbReference type="EMBL" id="CP000555">
    <property type="protein sequence ID" value="ABM93424.1"/>
    <property type="molecule type" value="Genomic_DNA"/>
</dbReference>
<dbReference type="RefSeq" id="WP_011828062.1">
    <property type="nucleotide sequence ID" value="NC_008825.1"/>
</dbReference>
<dbReference type="SMR" id="A2SCY5"/>
<dbReference type="STRING" id="420662.Mpe_A0462"/>
<dbReference type="CAZy" id="GT28">
    <property type="family name" value="Glycosyltransferase Family 28"/>
</dbReference>
<dbReference type="KEGG" id="mpt:Mpe_A0462"/>
<dbReference type="eggNOG" id="COG0707">
    <property type="taxonomic scope" value="Bacteria"/>
</dbReference>
<dbReference type="HOGENOM" id="CLU_037404_2_0_4"/>
<dbReference type="UniPathway" id="UPA00219"/>
<dbReference type="Proteomes" id="UP000000366">
    <property type="component" value="Chromosome"/>
</dbReference>
<dbReference type="GO" id="GO:0005886">
    <property type="term" value="C:plasma membrane"/>
    <property type="evidence" value="ECO:0007669"/>
    <property type="project" value="UniProtKB-SubCell"/>
</dbReference>
<dbReference type="GO" id="GO:0051991">
    <property type="term" value="F:UDP-N-acetyl-D-glucosamine:N-acetylmuramoyl-L-alanyl-D-glutamyl-meso-2,6-diaminopimelyl-D-alanyl-D-alanine-diphosphoundecaprenol 4-beta-N-acetylglucosaminlytransferase activity"/>
    <property type="evidence" value="ECO:0007669"/>
    <property type="project" value="RHEA"/>
</dbReference>
<dbReference type="GO" id="GO:0050511">
    <property type="term" value="F:undecaprenyldiphospho-muramoylpentapeptide beta-N-acetylglucosaminyltransferase activity"/>
    <property type="evidence" value="ECO:0007669"/>
    <property type="project" value="UniProtKB-UniRule"/>
</dbReference>
<dbReference type="GO" id="GO:0005975">
    <property type="term" value="P:carbohydrate metabolic process"/>
    <property type="evidence" value="ECO:0007669"/>
    <property type="project" value="InterPro"/>
</dbReference>
<dbReference type="GO" id="GO:0051301">
    <property type="term" value="P:cell division"/>
    <property type="evidence" value="ECO:0007669"/>
    <property type="project" value="UniProtKB-KW"/>
</dbReference>
<dbReference type="GO" id="GO:0071555">
    <property type="term" value="P:cell wall organization"/>
    <property type="evidence" value="ECO:0007669"/>
    <property type="project" value="UniProtKB-KW"/>
</dbReference>
<dbReference type="GO" id="GO:0030259">
    <property type="term" value="P:lipid glycosylation"/>
    <property type="evidence" value="ECO:0007669"/>
    <property type="project" value="UniProtKB-UniRule"/>
</dbReference>
<dbReference type="GO" id="GO:0009252">
    <property type="term" value="P:peptidoglycan biosynthetic process"/>
    <property type="evidence" value="ECO:0007669"/>
    <property type="project" value="UniProtKB-UniRule"/>
</dbReference>
<dbReference type="GO" id="GO:0008360">
    <property type="term" value="P:regulation of cell shape"/>
    <property type="evidence" value="ECO:0007669"/>
    <property type="project" value="UniProtKB-KW"/>
</dbReference>
<dbReference type="CDD" id="cd03785">
    <property type="entry name" value="GT28_MurG"/>
    <property type="match status" value="1"/>
</dbReference>
<dbReference type="Gene3D" id="3.40.50.2000">
    <property type="entry name" value="Glycogen Phosphorylase B"/>
    <property type="match status" value="2"/>
</dbReference>
<dbReference type="HAMAP" id="MF_00033">
    <property type="entry name" value="MurG"/>
    <property type="match status" value="1"/>
</dbReference>
<dbReference type="InterPro" id="IPR006009">
    <property type="entry name" value="GlcNAc_MurG"/>
</dbReference>
<dbReference type="InterPro" id="IPR007235">
    <property type="entry name" value="Glyco_trans_28_C"/>
</dbReference>
<dbReference type="InterPro" id="IPR004276">
    <property type="entry name" value="GlycoTrans_28_N"/>
</dbReference>
<dbReference type="NCBIfam" id="TIGR01133">
    <property type="entry name" value="murG"/>
    <property type="match status" value="1"/>
</dbReference>
<dbReference type="PANTHER" id="PTHR21015:SF22">
    <property type="entry name" value="GLYCOSYLTRANSFERASE"/>
    <property type="match status" value="1"/>
</dbReference>
<dbReference type="PANTHER" id="PTHR21015">
    <property type="entry name" value="UDP-N-ACETYLGLUCOSAMINE--N-ACETYLMURAMYL-(PENTAPEPTIDE) PYROPHOSPHORYL-UNDECAPRENOL N-ACETYLGLUCOSAMINE TRANSFERASE 1"/>
    <property type="match status" value="1"/>
</dbReference>
<dbReference type="Pfam" id="PF04101">
    <property type="entry name" value="Glyco_tran_28_C"/>
    <property type="match status" value="1"/>
</dbReference>
<dbReference type="Pfam" id="PF03033">
    <property type="entry name" value="Glyco_transf_28"/>
    <property type="match status" value="1"/>
</dbReference>
<dbReference type="SUPFAM" id="SSF53756">
    <property type="entry name" value="UDP-Glycosyltransferase/glycogen phosphorylase"/>
    <property type="match status" value="1"/>
</dbReference>
<gene>
    <name evidence="1" type="primary">murG</name>
    <name type="ordered locus">Mpe_A0462</name>
</gene>
<organism>
    <name type="scientific">Methylibium petroleiphilum (strain ATCC BAA-1232 / LMG 22953 / PM1)</name>
    <dbReference type="NCBI Taxonomy" id="420662"/>
    <lineage>
        <taxon>Bacteria</taxon>
        <taxon>Pseudomonadati</taxon>
        <taxon>Pseudomonadota</taxon>
        <taxon>Betaproteobacteria</taxon>
        <taxon>Burkholderiales</taxon>
        <taxon>Sphaerotilaceae</taxon>
        <taxon>Methylibium</taxon>
    </lineage>
</organism>
<feature type="chain" id="PRO_1000002668" description="UDP-N-acetylglucosamine--N-acetylmuramyl-(pentapeptide) pyrophosphoryl-undecaprenol N-acetylglucosamine transferase">
    <location>
        <begin position="1"/>
        <end position="367"/>
    </location>
</feature>
<feature type="binding site" evidence="1">
    <location>
        <begin position="13"/>
        <end position="15"/>
    </location>
    <ligand>
        <name>UDP-N-acetyl-alpha-D-glucosamine</name>
        <dbReference type="ChEBI" id="CHEBI:57705"/>
    </ligand>
</feature>
<feature type="binding site" evidence="1">
    <location>
        <position position="168"/>
    </location>
    <ligand>
        <name>UDP-N-acetyl-alpha-D-glucosamine</name>
        <dbReference type="ChEBI" id="CHEBI:57705"/>
    </ligand>
</feature>
<feature type="binding site" evidence="1">
    <location>
        <position position="196"/>
    </location>
    <ligand>
        <name>UDP-N-acetyl-alpha-D-glucosamine</name>
        <dbReference type="ChEBI" id="CHEBI:57705"/>
    </ligand>
</feature>
<feature type="binding site" evidence="1">
    <location>
        <position position="252"/>
    </location>
    <ligand>
        <name>UDP-N-acetyl-alpha-D-glucosamine</name>
        <dbReference type="ChEBI" id="CHEBI:57705"/>
    </ligand>
</feature>
<feature type="binding site" evidence="1">
    <location>
        <position position="297"/>
    </location>
    <ligand>
        <name>UDP-N-acetyl-alpha-D-glucosamine</name>
        <dbReference type="ChEBI" id="CHEBI:57705"/>
    </ligand>
</feature>
<evidence type="ECO:0000255" key="1">
    <source>
        <dbReference type="HAMAP-Rule" id="MF_00033"/>
    </source>
</evidence>
<proteinExistence type="inferred from homology"/>
<reference key="1">
    <citation type="journal article" date="2007" name="J. Bacteriol.">
        <title>Whole-genome analysis of the methyl tert-butyl ether-degrading beta-proteobacterium Methylibium petroleiphilum PM1.</title>
        <authorList>
            <person name="Kane S.R."/>
            <person name="Chakicherla A.Y."/>
            <person name="Chain P.S.G."/>
            <person name="Schmidt R."/>
            <person name="Shin M.W."/>
            <person name="Legler T.C."/>
            <person name="Scow K.M."/>
            <person name="Larimer F.W."/>
            <person name="Lucas S.M."/>
            <person name="Richardson P.M."/>
            <person name="Hristova K.R."/>
        </authorList>
    </citation>
    <scope>NUCLEOTIDE SEQUENCE [LARGE SCALE GENOMIC DNA]</scope>
    <source>
        <strain>ATCC BAA-1232 / LMG 22953 / PM1</strain>
    </source>
</reference>
<protein>
    <recommendedName>
        <fullName evidence="1">UDP-N-acetylglucosamine--N-acetylmuramyl-(pentapeptide) pyrophosphoryl-undecaprenol N-acetylglucosamine transferase</fullName>
        <ecNumber evidence="1">2.4.1.227</ecNumber>
    </recommendedName>
    <alternativeName>
        <fullName evidence="1">Undecaprenyl-PP-MurNAc-pentapeptide-UDPGlcNAc GlcNAc transferase</fullName>
    </alternativeName>
</protein>
<comment type="function">
    <text evidence="1">Cell wall formation. Catalyzes the transfer of a GlcNAc subunit on undecaprenyl-pyrophosphoryl-MurNAc-pentapeptide (lipid intermediate I) to form undecaprenyl-pyrophosphoryl-MurNAc-(pentapeptide)GlcNAc (lipid intermediate II).</text>
</comment>
<comment type="catalytic activity">
    <reaction evidence="1">
        <text>di-trans,octa-cis-undecaprenyl diphospho-N-acetyl-alpha-D-muramoyl-L-alanyl-D-glutamyl-meso-2,6-diaminopimeloyl-D-alanyl-D-alanine + UDP-N-acetyl-alpha-D-glucosamine = di-trans,octa-cis-undecaprenyl diphospho-[N-acetyl-alpha-D-glucosaminyl-(1-&gt;4)]-N-acetyl-alpha-D-muramoyl-L-alanyl-D-glutamyl-meso-2,6-diaminopimeloyl-D-alanyl-D-alanine + UDP + H(+)</text>
        <dbReference type="Rhea" id="RHEA:31227"/>
        <dbReference type="ChEBI" id="CHEBI:15378"/>
        <dbReference type="ChEBI" id="CHEBI:57705"/>
        <dbReference type="ChEBI" id="CHEBI:58223"/>
        <dbReference type="ChEBI" id="CHEBI:61387"/>
        <dbReference type="ChEBI" id="CHEBI:61388"/>
        <dbReference type="EC" id="2.4.1.227"/>
    </reaction>
</comment>
<comment type="pathway">
    <text evidence="1">Cell wall biogenesis; peptidoglycan biosynthesis.</text>
</comment>
<comment type="subcellular location">
    <subcellularLocation>
        <location evidence="1">Cell inner membrane</location>
        <topology evidence="1">Peripheral membrane protein</topology>
        <orientation evidence="1">Cytoplasmic side</orientation>
    </subcellularLocation>
</comment>
<comment type="similarity">
    <text evidence="1">Belongs to the glycosyltransferase 28 family. MurG subfamily.</text>
</comment>
<accession>A2SCY5</accession>
<keyword id="KW-0131">Cell cycle</keyword>
<keyword id="KW-0132">Cell division</keyword>
<keyword id="KW-0997">Cell inner membrane</keyword>
<keyword id="KW-1003">Cell membrane</keyword>
<keyword id="KW-0133">Cell shape</keyword>
<keyword id="KW-0961">Cell wall biogenesis/degradation</keyword>
<keyword id="KW-0328">Glycosyltransferase</keyword>
<keyword id="KW-0472">Membrane</keyword>
<keyword id="KW-0573">Peptidoglycan synthesis</keyword>
<keyword id="KW-1185">Reference proteome</keyword>
<keyword id="KW-0808">Transferase</keyword>
<name>MURG_METPP</name>
<sequence length="367" mass="38650">MTQRHLVVMAAGTGGHIIPGLAVAQEMQHRGWTVSWLGTEQGMENRLVPPAAESGIEMDTIAFSGLRGKGLLHTLTGGLRLLGAFAACAKILRRRATTAVLGMGGYVCFPGGLMASLLGKPLILVNADAALLMSNRALKPVADRIAFGFDGAAAATTRQAVVTGNPVRAEIETLPEPPVRYAGREGPLRVLVVGGSLGARVLNETLPQALALLAPAERPRVLHQTGQLNRDGVKEAYAAVGIDDGVEVLAFIDDMAARLAHCDVVICRAGAVTVSELCAAGVASVLVPLIVSTTSHQRDNALYMAQHGAAIHLPQSELTPQALAERLRTLDRPQLLGMAEKARALSRPRAAARVADEIERLVRKDGL</sequence>